<evidence type="ECO:0000255" key="1">
    <source>
        <dbReference type="HAMAP-Rule" id="MF_01245"/>
    </source>
</evidence>
<comment type="similarity">
    <text evidence="1">Belongs to the UPF0248 family.</text>
</comment>
<keyword id="KW-1185">Reference proteome</keyword>
<organism>
    <name type="scientific">Pyrobaculum aerophilum (strain ATCC 51768 / DSM 7523 / JCM 9630 / CIP 104966 / NBRC 100827 / IM2)</name>
    <dbReference type="NCBI Taxonomy" id="178306"/>
    <lineage>
        <taxon>Archaea</taxon>
        <taxon>Thermoproteota</taxon>
        <taxon>Thermoprotei</taxon>
        <taxon>Thermoproteales</taxon>
        <taxon>Thermoproteaceae</taxon>
        <taxon>Pyrobaculum</taxon>
    </lineage>
</organism>
<reference key="1">
    <citation type="journal article" date="2002" name="Proc. Natl. Acad. Sci. U.S.A.">
        <title>Genome sequence of the hyperthermophilic crenarchaeon Pyrobaculum aerophilum.</title>
        <authorList>
            <person name="Fitz-Gibbon S.T."/>
            <person name="Ladner H."/>
            <person name="Kim U.-J."/>
            <person name="Stetter K.O."/>
            <person name="Simon M.I."/>
            <person name="Miller J.H."/>
        </authorList>
    </citation>
    <scope>NUCLEOTIDE SEQUENCE [LARGE SCALE GENOMIC DNA]</scope>
    <source>
        <strain>ATCC 51768 / DSM 7523 / JCM 9630 / CIP 104966 / NBRC 100827 / IM2</strain>
    </source>
</reference>
<accession>Q8ZV05</accession>
<feature type="chain" id="PRO_0000053418" description="UPF0248 protein PAE2518">
    <location>
        <begin position="1"/>
        <end position="76"/>
    </location>
</feature>
<proteinExistence type="inferred from homology"/>
<sequence length="76" mass="8701">MKQIFNKLKWTGKKAYFWYVSRGGAGGEEVASTDDVVEVGSEGLVIRVGSQERYIPYHRIVEIRLESGEVLLNRRK</sequence>
<gene>
    <name type="ordered locus">PAE2518</name>
</gene>
<protein>
    <recommendedName>
        <fullName evidence="1">UPF0248 protein PAE2518</fullName>
    </recommendedName>
</protein>
<dbReference type="EMBL" id="AE009441">
    <property type="protein sequence ID" value="AAL64251.1"/>
    <property type="molecule type" value="Genomic_DNA"/>
</dbReference>
<dbReference type="RefSeq" id="WP_011008719.1">
    <property type="nucleotide sequence ID" value="NC_003364.1"/>
</dbReference>
<dbReference type="STRING" id="178306.PAE2518"/>
<dbReference type="EnsemblBacteria" id="AAL64251">
    <property type="protein sequence ID" value="AAL64251"/>
    <property type="gene ID" value="PAE2518"/>
</dbReference>
<dbReference type="GeneID" id="1464592"/>
<dbReference type="KEGG" id="pai:PAE2518"/>
<dbReference type="PATRIC" id="fig|178306.9.peg.1876"/>
<dbReference type="eggNOG" id="arCOG01302">
    <property type="taxonomic scope" value="Archaea"/>
</dbReference>
<dbReference type="HOGENOM" id="CLU_172276_3_0_2"/>
<dbReference type="InParanoid" id="Q8ZV05"/>
<dbReference type="Proteomes" id="UP000002439">
    <property type="component" value="Chromosome"/>
</dbReference>
<dbReference type="HAMAP" id="MF_01245">
    <property type="entry name" value="UPF0248"/>
    <property type="match status" value="1"/>
</dbReference>
<dbReference type="InterPro" id="IPR007547">
    <property type="entry name" value="UPF0248"/>
</dbReference>
<name>Y2518_PYRAE</name>